<dbReference type="EC" id="3.1.-.-" evidence="1"/>
<dbReference type="EC" id="3.6.4.-" evidence="1"/>
<dbReference type="EMBL" id="CP000962">
    <property type="protein sequence ID" value="ACA56909.1"/>
    <property type="molecule type" value="Genomic_DNA"/>
</dbReference>
<dbReference type="RefSeq" id="WP_012344715.1">
    <property type="nucleotide sequence ID" value="NC_010520.1"/>
</dbReference>
<dbReference type="SMR" id="B1L0S3"/>
<dbReference type="KEGG" id="cbl:CLK_2516"/>
<dbReference type="HOGENOM" id="CLU_011252_2_1_9"/>
<dbReference type="GO" id="GO:0005524">
    <property type="term" value="F:ATP binding"/>
    <property type="evidence" value="ECO:0007669"/>
    <property type="project" value="UniProtKB-UniRule"/>
</dbReference>
<dbReference type="GO" id="GO:0016887">
    <property type="term" value="F:ATP hydrolysis activity"/>
    <property type="evidence" value="ECO:0007669"/>
    <property type="project" value="InterPro"/>
</dbReference>
<dbReference type="GO" id="GO:0140664">
    <property type="term" value="F:ATP-dependent DNA damage sensor activity"/>
    <property type="evidence" value="ECO:0007669"/>
    <property type="project" value="InterPro"/>
</dbReference>
<dbReference type="GO" id="GO:0004519">
    <property type="term" value="F:endonuclease activity"/>
    <property type="evidence" value="ECO:0007669"/>
    <property type="project" value="UniProtKB-UniRule"/>
</dbReference>
<dbReference type="GO" id="GO:0030983">
    <property type="term" value="F:mismatched DNA binding"/>
    <property type="evidence" value="ECO:0007669"/>
    <property type="project" value="InterPro"/>
</dbReference>
<dbReference type="GO" id="GO:0043023">
    <property type="term" value="F:ribosomal large subunit binding"/>
    <property type="evidence" value="ECO:0007669"/>
    <property type="project" value="UniProtKB-UniRule"/>
</dbReference>
<dbReference type="GO" id="GO:0019843">
    <property type="term" value="F:rRNA binding"/>
    <property type="evidence" value="ECO:0007669"/>
    <property type="project" value="UniProtKB-UniRule"/>
</dbReference>
<dbReference type="GO" id="GO:0006298">
    <property type="term" value="P:mismatch repair"/>
    <property type="evidence" value="ECO:0007669"/>
    <property type="project" value="InterPro"/>
</dbReference>
<dbReference type="GO" id="GO:0045910">
    <property type="term" value="P:negative regulation of DNA recombination"/>
    <property type="evidence" value="ECO:0007669"/>
    <property type="project" value="InterPro"/>
</dbReference>
<dbReference type="GO" id="GO:0072344">
    <property type="term" value="P:rescue of stalled ribosome"/>
    <property type="evidence" value="ECO:0007669"/>
    <property type="project" value="UniProtKB-UniRule"/>
</dbReference>
<dbReference type="CDD" id="cd03280">
    <property type="entry name" value="ABC_MutS2"/>
    <property type="match status" value="1"/>
</dbReference>
<dbReference type="FunFam" id="3.30.1370.110:FF:000007">
    <property type="entry name" value="Endonuclease MutS2"/>
    <property type="match status" value="1"/>
</dbReference>
<dbReference type="FunFam" id="3.40.50.300:FF:000830">
    <property type="entry name" value="Endonuclease MutS2"/>
    <property type="match status" value="1"/>
</dbReference>
<dbReference type="Gene3D" id="3.30.1370.110">
    <property type="match status" value="1"/>
</dbReference>
<dbReference type="Gene3D" id="3.40.50.300">
    <property type="entry name" value="P-loop containing nucleotide triphosphate hydrolases"/>
    <property type="match status" value="1"/>
</dbReference>
<dbReference type="HAMAP" id="MF_00092">
    <property type="entry name" value="MutS2"/>
    <property type="match status" value="1"/>
</dbReference>
<dbReference type="InterPro" id="IPR000432">
    <property type="entry name" value="DNA_mismatch_repair_MutS_C"/>
</dbReference>
<dbReference type="InterPro" id="IPR007696">
    <property type="entry name" value="DNA_mismatch_repair_MutS_core"/>
</dbReference>
<dbReference type="InterPro" id="IPR036187">
    <property type="entry name" value="DNA_mismatch_repair_MutS_sf"/>
</dbReference>
<dbReference type="InterPro" id="IPR046893">
    <property type="entry name" value="MSSS"/>
</dbReference>
<dbReference type="InterPro" id="IPR045076">
    <property type="entry name" value="MutS"/>
</dbReference>
<dbReference type="InterPro" id="IPR005747">
    <property type="entry name" value="MutS2"/>
</dbReference>
<dbReference type="InterPro" id="IPR027417">
    <property type="entry name" value="P-loop_NTPase"/>
</dbReference>
<dbReference type="InterPro" id="IPR002625">
    <property type="entry name" value="Smr_dom"/>
</dbReference>
<dbReference type="InterPro" id="IPR036063">
    <property type="entry name" value="Smr_dom_sf"/>
</dbReference>
<dbReference type="NCBIfam" id="TIGR01069">
    <property type="entry name" value="mutS2"/>
    <property type="match status" value="1"/>
</dbReference>
<dbReference type="PANTHER" id="PTHR48466:SF2">
    <property type="entry name" value="OS10G0509000 PROTEIN"/>
    <property type="match status" value="1"/>
</dbReference>
<dbReference type="PANTHER" id="PTHR48466">
    <property type="entry name" value="OS10G0509000 PROTEIN-RELATED"/>
    <property type="match status" value="1"/>
</dbReference>
<dbReference type="Pfam" id="PF20297">
    <property type="entry name" value="MSSS"/>
    <property type="match status" value="1"/>
</dbReference>
<dbReference type="Pfam" id="PF00488">
    <property type="entry name" value="MutS_V"/>
    <property type="match status" value="1"/>
</dbReference>
<dbReference type="Pfam" id="PF01713">
    <property type="entry name" value="Smr"/>
    <property type="match status" value="1"/>
</dbReference>
<dbReference type="PIRSF" id="PIRSF005814">
    <property type="entry name" value="MutS_YshD"/>
    <property type="match status" value="1"/>
</dbReference>
<dbReference type="SMART" id="SM00534">
    <property type="entry name" value="MUTSac"/>
    <property type="match status" value="1"/>
</dbReference>
<dbReference type="SMART" id="SM00533">
    <property type="entry name" value="MUTSd"/>
    <property type="match status" value="1"/>
</dbReference>
<dbReference type="SMART" id="SM00463">
    <property type="entry name" value="SMR"/>
    <property type="match status" value="1"/>
</dbReference>
<dbReference type="SUPFAM" id="SSF48334">
    <property type="entry name" value="DNA repair protein MutS, domain III"/>
    <property type="match status" value="1"/>
</dbReference>
<dbReference type="SUPFAM" id="SSF52540">
    <property type="entry name" value="P-loop containing nucleoside triphosphate hydrolases"/>
    <property type="match status" value="1"/>
</dbReference>
<dbReference type="SUPFAM" id="SSF160443">
    <property type="entry name" value="SMR domain-like"/>
    <property type="match status" value="1"/>
</dbReference>
<dbReference type="PROSITE" id="PS00486">
    <property type="entry name" value="DNA_MISMATCH_REPAIR_2"/>
    <property type="match status" value="1"/>
</dbReference>
<dbReference type="PROSITE" id="PS50828">
    <property type="entry name" value="SMR"/>
    <property type="match status" value="1"/>
</dbReference>
<comment type="function">
    <text evidence="1">Endonuclease that is involved in the suppression of homologous recombination and thus may have a key role in the control of bacterial genetic diversity.</text>
</comment>
<comment type="function">
    <text evidence="1">Acts as a ribosome collision sensor, splitting the ribosome into its 2 subunits. Detects stalled/collided 70S ribosomes which it binds and splits by an ATP-hydrolysis driven conformational change. Acts upstream of the ribosome quality control system (RQC), a ribosome-associated complex that mediates the extraction of incompletely synthesized nascent chains from stalled ribosomes and their subsequent degradation. Probably generates substrates for RQC.</text>
</comment>
<comment type="subunit">
    <text evidence="1">Homodimer. Binds to stalled ribosomes, contacting rRNA.</text>
</comment>
<comment type="similarity">
    <text evidence="1">Belongs to the DNA mismatch repair MutS family. MutS2 subfamily.</text>
</comment>
<reference key="1">
    <citation type="journal article" date="2007" name="PLoS ONE">
        <title>Analysis of the neurotoxin complex genes in Clostridium botulinum A1-A4 and B1 strains: BoNT/A3, /Ba4 and /B1 clusters are located within plasmids.</title>
        <authorList>
            <person name="Smith T.J."/>
            <person name="Hill K.K."/>
            <person name="Foley B.T."/>
            <person name="Detter J.C."/>
            <person name="Munk A.C."/>
            <person name="Bruce D.C."/>
            <person name="Doggett N.A."/>
            <person name="Smith L.A."/>
            <person name="Marks J.D."/>
            <person name="Xie G."/>
            <person name="Brettin T.S."/>
        </authorList>
    </citation>
    <scope>NUCLEOTIDE SEQUENCE [LARGE SCALE GENOMIC DNA]</scope>
    <source>
        <strain>Loch Maree / Type A3</strain>
    </source>
</reference>
<protein>
    <recommendedName>
        <fullName evidence="1">Endonuclease MutS2</fullName>
        <ecNumber evidence="1">3.1.-.-</ecNumber>
    </recommendedName>
    <alternativeName>
        <fullName evidence="1">Ribosome-associated protein quality control-upstream factor</fullName>
        <shortName evidence="1">RQC-upstream factor</shortName>
        <shortName evidence="1">RqcU</shortName>
        <ecNumber evidence="1">3.6.4.-</ecNumber>
    </alternativeName>
</protein>
<organism>
    <name type="scientific">Clostridium botulinum (strain Loch Maree / Type A3)</name>
    <dbReference type="NCBI Taxonomy" id="498214"/>
    <lineage>
        <taxon>Bacteria</taxon>
        <taxon>Bacillati</taxon>
        <taxon>Bacillota</taxon>
        <taxon>Clostridia</taxon>
        <taxon>Eubacteriales</taxon>
        <taxon>Clostridiaceae</taxon>
        <taxon>Clostridium</taxon>
    </lineage>
</organism>
<keyword id="KW-0067">ATP-binding</keyword>
<keyword id="KW-0238">DNA-binding</keyword>
<keyword id="KW-0255">Endonuclease</keyword>
<keyword id="KW-0378">Hydrolase</keyword>
<keyword id="KW-0540">Nuclease</keyword>
<keyword id="KW-0547">Nucleotide-binding</keyword>
<keyword id="KW-0694">RNA-binding</keyword>
<keyword id="KW-0699">rRNA-binding</keyword>
<evidence type="ECO:0000255" key="1">
    <source>
        <dbReference type="HAMAP-Rule" id="MF_00092"/>
    </source>
</evidence>
<gene>
    <name evidence="1" type="primary">mutS2</name>
    <name evidence="1" type="synonym">rqcU</name>
    <name type="ordered locus">CLK_2516</name>
</gene>
<feature type="chain" id="PRO_1000093349" description="Endonuclease MutS2">
    <location>
        <begin position="1"/>
        <end position="788"/>
    </location>
</feature>
<feature type="domain" description="Smr" evidence="1">
    <location>
        <begin position="713"/>
        <end position="788"/>
    </location>
</feature>
<feature type="binding site" evidence="1">
    <location>
        <begin position="332"/>
        <end position="339"/>
    </location>
    <ligand>
        <name>ATP</name>
        <dbReference type="ChEBI" id="CHEBI:30616"/>
    </ligand>
</feature>
<proteinExistence type="inferred from homology"/>
<sequence>MKDKSIKVLEFNKIQEILKNYTCTKAAKDIIEDLKPYDSVYEVREHLEETKEAFKLLITKGAPPFEGVYDIRNGIYLAEKGSALLPGQLLKIAAVLRCARRFKEYINHKEEEESYRVLENICEGIFSLPKIEEEIFNAIEGEDEIADRASSILYNIRRSLKEKNYSVRDKINSLVRSYSSYLQENIYTVRGDRYVLPVKVEHKGAVPGLVHDQSSTGATLFIEPMSLVNLNNEIKELMLKEKAEIERILTVLSAKINANITGVKTDANIVWELDFIFAKAKFASEYNCTCPTINDEGIVDIIEGRHPLIDRREVVPISVKLGEEFTSLMITGPNTGGKTVTLKTVGLIHLMAMSGLMIPARENSVISYFNNVFADIGDEQSIEQSLSTFSSHMKNIVEIMDKADENSLVLFDELGAGTDPTEGAALAISILENLRKRGAKIIATTHYSELKAYALRKEGVENASVEFDVETLRPTYRLLIGIPGKSNAFEISKRLGLPDYIIDFARENISNENIRFEELIQNLQEKSIKAQEDARLAENLKLERDKEKKKYEEKLEGLQKVRDNALIDARREAKNIIKEAKEEADKILKDIRQLERMGYSSDARRKLEEERKKLKDKLDSIEEKEIKTVHKGEALKNVKEGDEVLLASINQKVIVLSKPDNKGDVLVQAGIMKITANIKDLRAAKGSNFNINSSKTKKSKKLNLNLRKVESSVDLRGMDAEEAIYTVDKYLDEAYLGGLGEVTIVHGKGTGVLRKTIMDMLKGHPHVKRHRLGEYGEGGTGVTVVEIK</sequence>
<name>MUTS2_CLOBM</name>
<accession>B1L0S3</accession>